<organism>
    <name type="scientific">Bacillus cereus (strain ATCC 10987 / NRS 248)</name>
    <dbReference type="NCBI Taxonomy" id="222523"/>
    <lineage>
        <taxon>Bacteria</taxon>
        <taxon>Bacillati</taxon>
        <taxon>Bacillota</taxon>
        <taxon>Bacilli</taxon>
        <taxon>Bacillales</taxon>
        <taxon>Bacillaceae</taxon>
        <taxon>Bacillus</taxon>
        <taxon>Bacillus cereus group</taxon>
    </lineage>
</organism>
<reference key="1">
    <citation type="journal article" date="2004" name="Nucleic Acids Res.">
        <title>The genome sequence of Bacillus cereus ATCC 10987 reveals metabolic adaptations and a large plasmid related to Bacillus anthracis pXO1.</title>
        <authorList>
            <person name="Rasko D.A."/>
            <person name="Ravel J."/>
            <person name="Oekstad O.A."/>
            <person name="Helgason E."/>
            <person name="Cer R.Z."/>
            <person name="Jiang L."/>
            <person name="Shores K.A."/>
            <person name="Fouts D.E."/>
            <person name="Tourasse N.J."/>
            <person name="Angiuoli S.V."/>
            <person name="Kolonay J.F."/>
            <person name="Nelson W.C."/>
            <person name="Kolstoe A.-B."/>
            <person name="Fraser C.M."/>
            <person name="Read T.D."/>
        </authorList>
    </citation>
    <scope>NUCLEOTIDE SEQUENCE [LARGE SCALE GENOMIC DNA]</scope>
    <source>
        <strain>ATCC 10987 / NRS 248</strain>
    </source>
</reference>
<comment type="similarity">
    <text evidence="1">Belongs to the UPF0637 family.</text>
</comment>
<proteinExistence type="inferred from homology"/>
<gene>
    <name type="ordered locus">BCE_4007</name>
</gene>
<accession>Q732A7</accession>
<sequence>MTLQTFKSTDFEVFTVDGLEERMSAIKTNIHPKLEALGEQFAAYLSKQTDENFFYHVAKHARRKVNPPNDTWVAFSTNKRGYKMLPHFQIGLWGTHAFIYFGLIYECPQKVETAHAFLEHINDLKTNIPNDFVWSIDHTKPSVKLHKTLETNDLQKMIERLATVKKAELLVGIHISPEEFSAMTNEQFLAKIESTMQSLLPLYALCNR</sequence>
<feature type="chain" id="PRO_0000348290" description="UPF0637 protein BCE_4007">
    <location>
        <begin position="1"/>
        <end position="208"/>
    </location>
</feature>
<evidence type="ECO:0000255" key="1">
    <source>
        <dbReference type="HAMAP-Rule" id="MF_01851"/>
    </source>
</evidence>
<protein>
    <recommendedName>
        <fullName evidence="1">UPF0637 protein BCE_4007</fullName>
    </recommendedName>
</protein>
<name>Y4007_BACC1</name>
<dbReference type="EMBL" id="AE017194">
    <property type="protein sequence ID" value="AAS42910.1"/>
    <property type="molecule type" value="Genomic_DNA"/>
</dbReference>
<dbReference type="SMR" id="Q732A7"/>
<dbReference type="KEGG" id="bca:BCE_4007"/>
<dbReference type="HOGENOM" id="CLU_096059_0_0_9"/>
<dbReference type="Proteomes" id="UP000002527">
    <property type="component" value="Chromosome"/>
</dbReference>
<dbReference type="Gene3D" id="3.30.930.20">
    <property type="entry name" value="Protein of unknown function DUF1054"/>
    <property type="match status" value="1"/>
</dbReference>
<dbReference type="HAMAP" id="MF_01851">
    <property type="entry name" value="UPF0637"/>
    <property type="match status" value="1"/>
</dbReference>
<dbReference type="InterPro" id="IPR009403">
    <property type="entry name" value="UPF0637"/>
</dbReference>
<dbReference type="InterPro" id="IPR053707">
    <property type="entry name" value="UPF0637_domain_sf"/>
</dbReference>
<dbReference type="Pfam" id="PF06335">
    <property type="entry name" value="DUF1054"/>
    <property type="match status" value="1"/>
</dbReference>
<dbReference type="PIRSF" id="PIRSF021332">
    <property type="entry name" value="DUF1054"/>
    <property type="match status" value="1"/>
</dbReference>
<dbReference type="SUPFAM" id="SSF142913">
    <property type="entry name" value="YktB/PF0168-like"/>
    <property type="match status" value="1"/>
</dbReference>